<keyword id="KW-0119">Carbohydrate metabolism</keyword>
<keyword id="KW-0963">Cytoplasm</keyword>
<keyword id="KW-0378">Hydrolase</keyword>
<keyword id="KW-0460">Magnesium</keyword>
<keyword id="KW-0479">Metal-binding</keyword>
<keyword id="KW-1185">Reference proteome</keyword>
<feature type="chain" id="PRO_0000200517" description="Fructose-1,6-bisphosphatase, cytosolic">
    <location>
        <begin position="1"/>
        <end position="339"/>
    </location>
</feature>
<feature type="binding site" evidence="2">
    <location>
        <begin position="19"/>
        <end position="23"/>
    </location>
    <ligand>
        <name>AMP</name>
        <dbReference type="ChEBI" id="CHEBI:456215"/>
    </ligand>
</feature>
<feature type="binding site" evidence="2">
    <location>
        <begin position="30"/>
        <end position="34"/>
    </location>
    <ligand>
        <name>AMP</name>
        <dbReference type="ChEBI" id="CHEBI:456215"/>
    </ligand>
</feature>
<feature type="binding site" evidence="1">
    <location>
        <position position="71"/>
    </location>
    <ligand>
        <name>Mg(2+)</name>
        <dbReference type="ChEBI" id="CHEBI:18420"/>
        <label>1</label>
    </ligand>
</feature>
<feature type="binding site" evidence="2">
    <location>
        <position position="100"/>
    </location>
    <ligand>
        <name>Mg(2+)</name>
        <dbReference type="ChEBI" id="CHEBI:18420"/>
        <label>1</label>
    </ligand>
</feature>
<feature type="binding site" evidence="2">
    <location>
        <position position="100"/>
    </location>
    <ligand>
        <name>Mg(2+)</name>
        <dbReference type="ChEBI" id="CHEBI:18420"/>
        <label>2</label>
    </ligand>
</feature>
<feature type="binding site" evidence="2">
    <location>
        <begin position="115"/>
        <end position="116"/>
    </location>
    <ligand>
        <name>AMP</name>
        <dbReference type="ChEBI" id="CHEBI:456215"/>
    </ligand>
</feature>
<feature type="binding site" evidence="2">
    <location>
        <position position="121"/>
    </location>
    <ligand>
        <name>Mg(2+)</name>
        <dbReference type="ChEBI" id="CHEBI:18420"/>
        <label>2</label>
    </ligand>
</feature>
<feature type="binding site" evidence="2">
    <location>
        <position position="121"/>
    </location>
    <ligand>
        <name>Mg(2+)</name>
        <dbReference type="ChEBI" id="CHEBI:18420"/>
        <label>3</label>
    </ligand>
</feature>
<feature type="binding site" evidence="2">
    <location>
        <position position="123"/>
    </location>
    <ligand>
        <name>Mg(2+)</name>
        <dbReference type="ChEBI" id="CHEBI:18420"/>
        <label>2</label>
    </ligand>
</feature>
<feature type="binding site" evidence="2">
    <location>
        <begin position="124"/>
        <end position="127"/>
    </location>
    <ligand>
        <name>substrate</name>
    </ligand>
</feature>
<feature type="binding site" evidence="2">
    <location>
        <position position="124"/>
    </location>
    <ligand>
        <name>Mg(2+)</name>
        <dbReference type="ChEBI" id="CHEBI:18420"/>
        <label>3</label>
    </ligand>
</feature>
<feature type="binding site" evidence="2">
    <location>
        <begin position="215"/>
        <end position="218"/>
    </location>
    <ligand>
        <name>substrate</name>
    </ligand>
</feature>
<feature type="binding site" evidence="2">
    <location>
        <begin position="246"/>
        <end position="251"/>
    </location>
    <ligand>
        <name>substrate</name>
    </ligand>
</feature>
<feature type="binding site" evidence="2">
    <location>
        <position position="267"/>
    </location>
    <ligand>
        <name>substrate</name>
    </ligand>
</feature>
<feature type="binding site" evidence="2">
    <location>
        <begin position="277"/>
        <end position="279"/>
    </location>
    <ligand>
        <name>substrate</name>
    </ligand>
</feature>
<feature type="binding site" evidence="2">
    <location>
        <position position="283"/>
    </location>
    <ligand>
        <name>Mg(2+)</name>
        <dbReference type="ChEBI" id="CHEBI:18420"/>
        <label>3</label>
    </ligand>
</feature>
<organism>
    <name type="scientific">Oryza sativa subsp. japonica</name>
    <name type="common">Rice</name>
    <dbReference type="NCBI Taxonomy" id="39947"/>
    <lineage>
        <taxon>Eukaryota</taxon>
        <taxon>Viridiplantae</taxon>
        <taxon>Streptophyta</taxon>
        <taxon>Embryophyta</taxon>
        <taxon>Tracheophyta</taxon>
        <taxon>Spermatophyta</taxon>
        <taxon>Magnoliopsida</taxon>
        <taxon>Liliopsida</taxon>
        <taxon>Poales</taxon>
        <taxon>Poaceae</taxon>
        <taxon>BOP clade</taxon>
        <taxon>Oryzoideae</taxon>
        <taxon>Oryzeae</taxon>
        <taxon>Oryzinae</taxon>
        <taxon>Oryza</taxon>
        <taxon>Oryza sativa</taxon>
    </lineage>
</organism>
<accession>Q0JHF8</accession>
<accession>A0A0P0VAT7</accession>
<accession>A7J2C2</accession>
<accession>O64421</accession>
<accession>Q5N9E2</accession>
<accession>Q94JN1</accession>
<reference key="1">
    <citation type="online journal article" date="1998" name="Plant Gene Register">
        <title>Cloning of a cDNA encoding cytosolic fructose-1,6-bisphosphatase from rice (Oryza sativa L.).</title>
        <authorList>
            <person name="Takahashi S."/>
            <person name="Hirose T."/>
            <person name="Imaizumi N."/>
            <person name="Ohsugi R."/>
        </authorList>
        <locator>PGR98-084</locator>
    </citation>
    <scope>NUCLEOTIDE SEQUENCE [MRNA]</scope>
    <source>
        <strain>cv. Nipponbare</strain>
        <tissue>Leaf</tissue>
    </source>
</reference>
<reference key="2">
    <citation type="submission" date="2006-07" db="EMBL/GenBank/DDBJ databases">
        <title>Cloning and characterization of cytosolic fructose-1,6-bisphosphatase in rice.</title>
        <authorList>
            <person name="Lee S.-K."/>
            <person name="Hahn T.-R."/>
            <person name="Jeon J.-S."/>
        </authorList>
    </citation>
    <scope>NUCLEOTIDE SEQUENCE [MRNA]</scope>
    <source>
        <strain>cv. Nakdong</strain>
    </source>
</reference>
<reference key="3">
    <citation type="journal article" date="2002" name="Nature">
        <title>The genome sequence and structure of rice chromosome 1.</title>
        <authorList>
            <person name="Sasaki T."/>
            <person name="Matsumoto T."/>
            <person name="Yamamoto K."/>
            <person name="Sakata K."/>
            <person name="Baba T."/>
            <person name="Katayose Y."/>
            <person name="Wu J."/>
            <person name="Niimura Y."/>
            <person name="Cheng Z."/>
            <person name="Nagamura Y."/>
            <person name="Antonio B.A."/>
            <person name="Kanamori H."/>
            <person name="Hosokawa S."/>
            <person name="Masukawa M."/>
            <person name="Arikawa K."/>
            <person name="Chiden Y."/>
            <person name="Hayashi M."/>
            <person name="Okamoto M."/>
            <person name="Ando T."/>
            <person name="Aoki H."/>
            <person name="Arita K."/>
            <person name="Hamada M."/>
            <person name="Harada C."/>
            <person name="Hijishita S."/>
            <person name="Honda M."/>
            <person name="Ichikawa Y."/>
            <person name="Idonuma A."/>
            <person name="Iijima M."/>
            <person name="Ikeda M."/>
            <person name="Ikeno M."/>
            <person name="Ito S."/>
            <person name="Ito T."/>
            <person name="Ito Y."/>
            <person name="Ito Y."/>
            <person name="Iwabuchi A."/>
            <person name="Kamiya K."/>
            <person name="Karasawa W."/>
            <person name="Katagiri S."/>
            <person name="Kikuta A."/>
            <person name="Kobayashi N."/>
            <person name="Kono I."/>
            <person name="Machita K."/>
            <person name="Maehara T."/>
            <person name="Mizuno H."/>
            <person name="Mizubayashi T."/>
            <person name="Mukai Y."/>
            <person name="Nagasaki H."/>
            <person name="Nakashima M."/>
            <person name="Nakama Y."/>
            <person name="Nakamichi Y."/>
            <person name="Nakamura M."/>
            <person name="Namiki N."/>
            <person name="Negishi M."/>
            <person name="Ohta I."/>
            <person name="Ono N."/>
            <person name="Saji S."/>
            <person name="Sakai K."/>
            <person name="Shibata M."/>
            <person name="Shimokawa T."/>
            <person name="Shomura A."/>
            <person name="Song J."/>
            <person name="Takazaki Y."/>
            <person name="Terasawa K."/>
            <person name="Tsuji K."/>
            <person name="Waki K."/>
            <person name="Yamagata H."/>
            <person name="Yamane H."/>
            <person name="Yoshiki S."/>
            <person name="Yoshihara R."/>
            <person name="Yukawa K."/>
            <person name="Zhong H."/>
            <person name="Iwama H."/>
            <person name="Endo T."/>
            <person name="Ito H."/>
            <person name="Hahn J.H."/>
            <person name="Kim H.-I."/>
            <person name="Eun M.-Y."/>
            <person name="Yano M."/>
            <person name="Jiang J."/>
            <person name="Gojobori T."/>
        </authorList>
    </citation>
    <scope>NUCLEOTIDE SEQUENCE [LARGE SCALE GENOMIC DNA]</scope>
    <source>
        <strain>cv. Nipponbare</strain>
    </source>
</reference>
<reference key="4">
    <citation type="journal article" date="2005" name="Nature">
        <title>The map-based sequence of the rice genome.</title>
        <authorList>
            <consortium name="International rice genome sequencing project (IRGSP)"/>
        </authorList>
    </citation>
    <scope>NUCLEOTIDE SEQUENCE [LARGE SCALE GENOMIC DNA]</scope>
    <source>
        <strain>cv. Nipponbare</strain>
    </source>
</reference>
<reference key="5">
    <citation type="journal article" date="2008" name="Nucleic Acids Res.">
        <title>The rice annotation project database (RAP-DB): 2008 update.</title>
        <authorList>
            <consortium name="The rice annotation project (RAP)"/>
        </authorList>
    </citation>
    <scope>GENOME REANNOTATION</scope>
    <source>
        <strain>cv. Nipponbare</strain>
    </source>
</reference>
<reference key="6">
    <citation type="journal article" date="2013" name="Rice">
        <title>Improvement of the Oryza sativa Nipponbare reference genome using next generation sequence and optical map data.</title>
        <authorList>
            <person name="Kawahara Y."/>
            <person name="de la Bastide M."/>
            <person name="Hamilton J.P."/>
            <person name="Kanamori H."/>
            <person name="McCombie W.R."/>
            <person name="Ouyang S."/>
            <person name="Schwartz D.C."/>
            <person name="Tanaka T."/>
            <person name="Wu J."/>
            <person name="Zhou S."/>
            <person name="Childs K.L."/>
            <person name="Davidson R.M."/>
            <person name="Lin H."/>
            <person name="Quesada-Ocampo L."/>
            <person name="Vaillancourt B."/>
            <person name="Sakai H."/>
            <person name="Lee S.S."/>
            <person name="Kim J."/>
            <person name="Numa H."/>
            <person name="Itoh T."/>
            <person name="Buell C.R."/>
            <person name="Matsumoto T."/>
        </authorList>
    </citation>
    <scope>GENOME REANNOTATION</scope>
    <source>
        <strain>cv. Nipponbare</strain>
    </source>
</reference>
<reference key="7">
    <citation type="journal article" date="2003" name="Science">
        <title>Collection, mapping, and annotation of over 28,000 cDNA clones from japonica rice.</title>
        <authorList>
            <consortium name="The rice full-length cDNA consortium"/>
        </authorList>
    </citation>
    <scope>NUCLEOTIDE SEQUENCE [LARGE SCALE MRNA]</scope>
    <source>
        <strain>cv. Nipponbare</strain>
    </source>
</reference>
<reference key="8">
    <citation type="journal article" date="2013" name="Plant Biotechnol.">
        <title>Rice monoculm mutation moc2, which inhibits outgrowth of the second tillers, is ascribed to lack of a fructose-1,6-bisphosphatase.</title>
        <authorList>
            <person name="Koumoto T."/>
            <person name="Shimada H."/>
            <person name="Kusano H."/>
            <person name="She K.-C."/>
            <person name="Iwamoto M."/>
            <person name="Takano M."/>
        </authorList>
    </citation>
    <scope>FUNCTION</scope>
    <scope>CATALYTIC ACTIVITY</scope>
    <scope>DISRUPTION PHENOTYPE</scope>
</reference>
<dbReference type="EC" id="3.1.3.11" evidence="3"/>
<dbReference type="EMBL" id="AB007193">
    <property type="protein sequence ID" value="BAA25422.1"/>
    <property type="molecule type" value="mRNA"/>
</dbReference>
<dbReference type="EMBL" id="DQ865190">
    <property type="protein sequence ID" value="ABI94362.1"/>
    <property type="molecule type" value="mRNA"/>
</dbReference>
<dbReference type="EMBL" id="AP003270">
    <property type="protein sequence ID" value="BAD81916.1"/>
    <property type="molecule type" value="Genomic_DNA"/>
</dbReference>
<dbReference type="EMBL" id="AP008207">
    <property type="protein sequence ID" value="BAF06820.1"/>
    <property type="status" value="ALT_SEQ"/>
    <property type="molecule type" value="Genomic_DNA"/>
</dbReference>
<dbReference type="EMBL" id="AP014957">
    <property type="protein sequence ID" value="BAS75386.1"/>
    <property type="status" value="ALT_SEQ"/>
    <property type="molecule type" value="Genomic_DNA"/>
</dbReference>
<dbReference type="EMBL" id="AK070516">
    <property type="protein sequence ID" value="BAG92000.1"/>
    <property type="molecule type" value="mRNA"/>
</dbReference>
<dbReference type="EMBL" id="AK119536">
    <property type="protein sequence ID" value="BAG99676.1"/>
    <property type="molecule type" value="mRNA"/>
</dbReference>
<dbReference type="RefSeq" id="XP_015641461.1">
    <property type="nucleotide sequence ID" value="XM_015785975.1"/>
</dbReference>
<dbReference type="SMR" id="Q0JHF8"/>
<dbReference type="FunCoup" id="Q0JHF8">
    <property type="interactions" value="2408"/>
</dbReference>
<dbReference type="STRING" id="39947.Q0JHF8"/>
<dbReference type="PaxDb" id="39947-Q0JHF8"/>
<dbReference type="EnsemblPlants" id="Os01t0866400-01">
    <property type="protein sequence ID" value="Os01t0866400-01"/>
    <property type="gene ID" value="Os01g0866400"/>
</dbReference>
<dbReference type="Gramene" id="Os01t0866400-01">
    <property type="protein sequence ID" value="Os01t0866400-01"/>
    <property type="gene ID" value="Os01g0866400"/>
</dbReference>
<dbReference type="KEGG" id="dosa:Os01g0866400"/>
<dbReference type="eggNOG" id="KOG1458">
    <property type="taxonomic scope" value="Eukaryota"/>
</dbReference>
<dbReference type="HOGENOM" id="CLU_039977_1_0_1"/>
<dbReference type="InParanoid" id="Q0JHF8"/>
<dbReference type="OrthoDB" id="10256725at2759"/>
<dbReference type="Proteomes" id="UP000000763">
    <property type="component" value="Chromosome 1"/>
</dbReference>
<dbReference type="Proteomes" id="UP000059680">
    <property type="component" value="Chromosome 1"/>
</dbReference>
<dbReference type="GO" id="GO:0005737">
    <property type="term" value="C:cytoplasm"/>
    <property type="evidence" value="ECO:0000318"/>
    <property type="project" value="GO_Central"/>
</dbReference>
<dbReference type="GO" id="GO:0005829">
    <property type="term" value="C:cytosol"/>
    <property type="evidence" value="ECO:0000318"/>
    <property type="project" value="GO_Central"/>
</dbReference>
<dbReference type="GO" id="GO:0042132">
    <property type="term" value="F:fructose 1,6-bisphosphate 1-phosphatase activity"/>
    <property type="evidence" value="ECO:0000318"/>
    <property type="project" value="GO_Central"/>
</dbReference>
<dbReference type="GO" id="GO:0046872">
    <property type="term" value="F:metal ion binding"/>
    <property type="evidence" value="ECO:0007669"/>
    <property type="project" value="UniProtKB-KW"/>
</dbReference>
<dbReference type="GO" id="GO:0030388">
    <property type="term" value="P:fructose 1,6-bisphosphate metabolic process"/>
    <property type="evidence" value="ECO:0000318"/>
    <property type="project" value="GO_Central"/>
</dbReference>
<dbReference type="GO" id="GO:0006002">
    <property type="term" value="P:fructose 6-phosphate metabolic process"/>
    <property type="evidence" value="ECO:0000318"/>
    <property type="project" value="GO_Central"/>
</dbReference>
<dbReference type="GO" id="GO:0006000">
    <property type="term" value="P:fructose metabolic process"/>
    <property type="evidence" value="ECO:0000318"/>
    <property type="project" value="GO_Central"/>
</dbReference>
<dbReference type="GO" id="GO:0006094">
    <property type="term" value="P:gluconeogenesis"/>
    <property type="evidence" value="ECO:0000318"/>
    <property type="project" value="GO_Central"/>
</dbReference>
<dbReference type="CDD" id="cd00354">
    <property type="entry name" value="FBPase"/>
    <property type="match status" value="1"/>
</dbReference>
<dbReference type="FunFam" id="3.40.190.80:FF:000001">
    <property type="entry name" value="Fructose-1,6-bisphosphatase class 1"/>
    <property type="match status" value="1"/>
</dbReference>
<dbReference type="FunFam" id="3.30.540.10:FF:000008">
    <property type="entry name" value="Fructose-1,6-bisphosphatase, cytosolic"/>
    <property type="match status" value="1"/>
</dbReference>
<dbReference type="Gene3D" id="3.40.190.80">
    <property type="match status" value="1"/>
</dbReference>
<dbReference type="Gene3D" id="3.30.540.10">
    <property type="entry name" value="Fructose-1,6-Bisphosphatase, subunit A, domain 1"/>
    <property type="match status" value="1"/>
</dbReference>
<dbReference type="HAMAP" id="MF_01855">
    <property type="entry name" value="FBPase_class1"/>
    <property type="match status" value="1"/>
</dbReference>
<dbReference type="InterPro" id="IPR044015">
    <property type="entry name" value="FBPase_C_dom"/>
</dbReference>
<dbReference type="InterPro" id="IPR000146">
    <property type="entry name" value="FBPase_class-1"/>
</dbReference>
<dbReference type="InterPro" id="IPR033391">
    <property type="entry name" value="FBPase_N"/>
</dbReference>
<dbReference type="InterPro" id="IPR028343">
    <property type="entry name" value="FBPtase"/>
</dbReference>
<dbReference type="InterPro" id="IPR020548">
    <property type="entry name" value="Fructose_bisphosphatase_AS"/>
</dbReference>
<dbReference type="NCBIfam" id="NF006778">
    <property type="entry name" value="PRK09293.1-1"/>
    <property type="match status" value="1"/>
</dbReference>
<dbReference type="NCBIfam" id="NF006779">
    <property type="entry name" value="PRK09293.1-3"/>
    <property type="match status" value="1"/>
</dbReference>
<dbReference type="PANTHER" id="PTHR11556:SF41">
    <property type="entry name" value="FRUCTOSE-1,6-BISPHOSPHATASE, CYTOSOLIC"/>
    <property type="match status" value="1"/>
</dbReference>
<dbReference type="PANTHER" id="PTHR11556">
    <property type="entry name" value="FRUCTOSE-1,6-BISPHOSPHATASE-RELATED"/>
    <property type="match status" value="1"/>
</dbReference>
<dbReference type="Pfam" id="PF00316">
    <property type="entry name" value="FBPase"/>
    <property type="match status" value="1"/>
</dbReference>
<dbReference type="Pfam" id="PF18913">
    <property type="entry name" value="FBPase_C"/>
    <property type="match status" value="1"/>
</dbReference>
<dbReference type="PIRSF" id="PIRSF500210">
    <property type="entry name" value="FBPtase"/>
    <property type="match status" value="1"/>
</dbReference>
<dbReference type="PIRSF" id="PIRSF000904">
    <property type="entry name" value="FBPtase_SBPase"/>
    <property type="match status" value="1"/>
</dbReference>
<dbReference type="PRINTS" id="PR00115">
    <property type="entry name" value="F16BPHPHTASE"/>
</dbReference>
<dbReference type="SUPFAM" id="SSF56655">
    <property type="entry name" value="Carbohydrate phosphatase"/>
    <property type="match status" value="1"/>
</dbReference>
<dbReference type="PROSITE" id="PS00124">
    <property type="entry name" value="FBPASE"/>
    <property type="match status" value="1"/>
</dbReference>
<sequence length="339" mass="37035">MDHEADAYRTDLMTITRYVLNEQSRNPEARGDLTILLSHIVLGCKFVASAVNKAGLAKLIGLAGETNVQGEEQKKLDVLSNEVFVKALVSSGRTCVLVSEEDEEATFVDPALRGKYCVCFDPLDGSSNIDCGVSIGTIFGIYMIKDKENVTLEDVLQPGKNMVAAGYCMYGSSCTLVLSTGNGVNGFTLDPSLGEFILTHPDIKIPKKGKIYSVNEGNAKNWDEPTAKFVEKCKFPKDGSSPKSLRYIGSMVADVHRTLLYGGVFLYPADKKSPNGKLRVLYEVFPMSFLMEQAGGQSFTGKERALDLVPTKIHERSPIFLGSFEDVEEIKGLYAAQAK</sequence>
<name>F16P2_ORYSJ</name>
<evidence type="ECO:0000250" key="1"/>
<evidence type="ECO:0000250" key="2">
    <source>
        <dbReference type="UniProtKB" id="P00636"/>
    </source>
</evidence>
<evidence type="ECO:0000269" key="3">
    <source ref="8"/>
</evidence>
<evidence type="ECO:0000303" key="4">
    <source ref="8"/>
</evidence>
<evidence type="ECO:0000305" key="5"/>
<evidence type="ECO:0000312" key="6">
    <source>
        <dbReference type="EMBL" id="ABI94362.1"/>
    </source>
</evidence>
<evidence type="ECO:0000312" key="7">
    <source>
        <dbReference type="EMBL" id="BAD81916.1"/>
    </source>
</evidence>
<evidence type="ECO:0000312" key="8">
    <source>
        <dbReference type="EMBL" id="BAS75386.1"/>
    </source>
</evidence>
<proteinExistence type="evidence at protein level"/>
<comment type="function">
    <text evidence="3">Catalyzes the first irreversible reaction from fructose-1,6-bisphosphate to fructose-6-phosphate and inorganic phosphate and plays an important regulatory role in sucrose biosynthesis and metabolism. Required for sucrose supply and tiller bud outgrowth.</text>
</comment>
<comment type="catalytic activity">
    <reaction evidence="3">
        <text>beta-D-fructose 1,6-bisphosphate + H2O = beta-D-fructose 6-phosphate + phosphate</text>
        <dbReference type="Rhea" id="RHEA:11064"/>
        <dbReference type="ChEBI" id="CHEBI:15377"/>
        <dbReference type="ChEBI" id="CHEBI:32966"/>
        <dbReference type="ChEBI" id="CHEBI:43474"/>
        <dbReference type="ChEBI" id="CHEBI:57634"/>
        <dbReference type="EC" id="3.1.3.11"/>
    </reaction>
</comment>
<comment type="cofactor">
    <cofactor evidence="2">
        <name>Mg(2+)</name>
        <dbReference type="ChEBI" id="CHEBI:18420"/>
    </cofactor>
    <text evidence="2">Binds 3 Mg(2+) ions per subunit.</text>
</comment>
<comment type="subunit">
    <text evidence="2">Homotetramer.</text>
</comment>
<comment type="subcellular location">
    <subcellularLocation>
        <location evidence="5">Cytoplasm</location>
    </subcellularLocation>
</comment>
<comment type="disruption phenotype">
    <text evidence="3">Reduced tiller numbers, pale-green leaves, reduced growth rate and dwarf phenotype.</text>
</comment>
<comment type="miscellaneous">
    <text>In plants there are two FBPase isozymes: one in the cytosol and the other in the chloroplast.</text>
</comment>
<comment type="similarity">
    <text evidence="5">Belongs to the FBPase class 1 family.</text>
</comment>
<comment type="sequence caution" evidence="5">
    <conflict type="erroneous gene model prediction">
        <sequence resource="EMBL-CDS" id="BAF06820"/>
    </conflict>
</comment>
<comment type="sequence caution" evidence="5">
    <conflict type="erroneous gene model prediction">
        <sequence resource="EMBL-CDS" id="BAS75386"/>
    </conflict>
</comment>
<gene>
    <name evidence="6" type="primary">CFBP1</name>
    <name evidence="4" type="synonym">FBP1</name>
    <name evidence="4" type="synonym">MOC2</name>
    <name evidence="8" type="ordered locus">Os01g0866400</name>
    <name evidence="5" type="ordered locus">LOC_Os01g64660</name>
    <name evidence="7" type="ORF">P0505D12.36</name>
</gene>
<protein>
    <recommendedName>
        <fullName evidence="5">Fructose-1,6-bisphosphatase, cytosolic</fullName>
        <shortName evidence="5">FBPase</shortName>
        <ecNumber evidence="3">3.1.3.11</ecNumber>
    </recommendedName>
    <alternativeName>
        <fullName evidence="5">D-fructose-1,6-bisphosphate 1-phosphohydrolase</fullName>
    </alternativeName>
    <alternativeName>
        <fullName evidence="5">Protein MONOCULM 2</fullName>
    </alternativeName>
</protein>